<reference key="1">
    <citation type="submission" date="2007-05" db="EMBL/GenBank/DDBJ databases">
        <title>Complete sequence of chromosome of Staphylococcus aureus subsp. aureus JH9.</title>
        <authorList>
            <consortium name="US DOE Joint Genome Institute"/>
            <person name="Copeland A."/>
            <person name="Lucas S."/>
            <person name="Lapidus A."/>
            <person name="Barry K."/>
            <person name="Detter J.C."/>
            <person name="Glavina del Rio T."/>
            <person name="Hammon N."/>
            <person name="Israni S."/>
            <person name="Pitluck S."/>
            <person name="Chain P."/>
            <person name="Malfatti S."/>
            <person name="Shin M."/>
            <person name="Vergez L."/>
            <person name="Schmutz J."/>
            <person name="Larimer F."/>
            <person name="Land M."/>
            <person name="Hauser L."/>
            <person name="Kyrpides N."/>
            <person name="Kim E."/>
            <person name="Tomasz A."/>
            <person name="Richardson P."/>
        </authorList>
    </citation>
    <scope>NUCLEOTIDE SEQUENCE [LARGE SCALE GENOMIC DNA]</scope>
    <source>
        <strain>JH9</strain>
    </source>
</reference>
<proteinExistence type="inferred from homology"/>
<gene>
    <name evidence="1" type="primary">grpE</name>
    <name type="ordered locus">SaurJH9_1639</name>
</gene>
<name>GRPE_STAA9</name>
<comment type="function">
    <text evidence="1">Participates actively in the response to hyperosmotic and heat shock by preventing the aggregation of stress-denatured proteins, in association with DnaK and GrpE. It is the nucleotide exchange factor for DnaK and may function as a thermosensor. Unfolded proteins bind initially to DnaJ; upon interaction with the DnaJ-bound protein, DnaK hydrolyzes its bound ATP, resulting in the formation of a stable complex. GrpE releases ADP from DnaK; ATP binding to DnaK triggers the release of the substrate protein, thus completing the reaction cycle. Several rounds of ATP-dependent interactions between DnaJ, DnaK and GrpE are required for fully efficient folding.</text>
</comment>
<comment type="subunit">
    <text evidence="1">Homodimer.</text>
</comment>
<comment type="subcellular location">
    <subcellularLocation>
        <location evidence="1">Cytoplasm</location>
    </subcellularLocation>
</comment>
<comment type="similarity">
    <text evidence="1">Belongs to the GrpE family.</text>
</comment>
<sequence length="208" mass="24022">MTNKDESVEKNTESTVEETNIKQNIDDSVEQAEESKGHLQDEAIEETSDENVIEEIDPKDQKINELQQLADENEEKYLRLYAEFENYKRRIQKENEINKTYQAQRVLTDILPAIDNIERALQIEGDDETFKSLQKGVQMVHESLINALKDNGLEVIKTEGEAFDPNIHQAVVQDDNPDFESGEITQELQKGYKLKDRVLRPSMVKVNQ</sequence>
<keyword id="KW-0143">Chaperone</keyword>
<keyword id="KW-0963">Cytoplasm</keyword>
<keyword id="KW-0346">Stress response</keyword>
<accession>A5ITA9</accession>
<dbReference type="EMBL" id="CP000703">
    <property type="protein sequence ID" value="ABQ49432.1"/>
    <property type="molecule type" value="Genomic_DNA"/>
</dbReference>
<dbReference type="RefSeq" id="WP_000182211.1">
    <property type="nucleotide sequence ID" value="NC_009487.1"/>
</dbReference>
<dbReference type="SMR" id="A5ITA9"/>
<dbReference type="KEGG" id="saj:SaurJH9_1639"/>
<dbReference type="HOGENOM" id="CLU_057217_6_3_9"/>
<dbReference type="GO" id="GO:0005737">
    <property type="term" value="C:cytoplasm"/>
    <property type="evidence" value="ECO:0007669"/>
    <property type="project" value="UniProtKB-SubCell"/>
</dbReference>
<dbReference type="GO" id="GO:0000774">
    <property type="term" value="F:adenyl-nucleotide exchange factor activity"/>
    <property type="evidence" value="ECO:0007669"/>
    <property type="project" value="InterPro"/>
</dbReference>
<dbReference type="GO" id="GO:0042803">
    <property type="term" value="F:protein homodimerization activity"/>
    <property type="evidence" value="ECO:0007669"/>
    <property type="project" value="InterPro"/>
</dbReference>
<dbReference type="GO" id="GO:0051087">
    <property type="term" value="F:protein-folding chaperone binding"/>
    <property type="evidence" value="ECO:0007669"/>
    <property type="project" value="InterPro"/>
</dbReference>
<dbReference type="GO" id="GO:0051082">
    <property type="term" value="F:unfolded protein binding"/>
    <property type="evidence" value="ECO:0007669"/>
    <property type="project" value="TreeGrafter"/>
</dbReference>
<dbReference type="GO" id="GO:0006457">
    <property type="term" value="P:protein folding"/>
    <property type="evidence" value="ECO:0007669"/>
    <property type="project" value="InterPro"/>
</dbReference>
<dbReference type="CDD" id="cd00446">
    <property type="entry name" value="GrpE"/>
    <property type="match status" value="1"/>
</dbReference>
<dbReference type="FunFam" id="2.30.22.10:FF:000001">
    <property type="entry name" value="Protein GrpE"/>
    <property type="match status" value="1"/>
</dbReference>
<dbReference type="FunFam" id="3.90.20.20:FF:000002">
    <property type="entry name" value="Protein GrpE"/>
    <property type="match status" value="1"/>
</dbReference>
<dbReference type="Gene3D" id="3.90.20.20">
    <property type="match status" value="1"/>
</dbReference>
<dbReference type="Gene3D" id="2.30.22.10">
    <property type="entry name" value="Head domain of nucleotide exchange factor GrpE"/>
    <property type="match status" value="1"/>
</dbReference>
<dbReference type="HAMAP" id="MF_01151">
    <property type="entry name" value="GrpE"/>
    <property type="match status" value="1"/>
</dbReference>
<dbReference type="InterPro" id="IPR000740">
    <property type="entry name" value="GrpE"/>
</dbReference>
<dbReference type="InterPro" id="IPR013805">
    <property type="entry name" value="GrpE_coiled_coil"/>
</dbReference>
<dbReference type="InterPro" id="IPR009012">
    <property type="entry name" value="GrpE_head"/>
</dbReference>
<dbReference type="NCBIfam" id="NF010738">
    <property type="entry name" value="PRK14140.1"/>
    <property type="match status" value="1"/>
</dbReference>
<dbReference type="PANTHER" id="PTHR21237">
    <property type="entry name" value="GRPE PROTEIN"/>
    <property type="match status" value="1"/>
</dbReference>
<dbReference type="PANTHER" id="PTHR21237:SF23">
    <property type="entry name" value="GRPE PROTEIN HOMOLOG, MITOCHONDRIAL"/>
    <property type="match status" value="1"/>
</dbReference>
<dbReference type="Pfam" id="PF01025">
    <property type="entry name" value="GrpE"/>
    <property type="match status" value="1"/>
</dbReference>
<dbReference type="PRINTS" id="PR00773">
    <property type="entry name" value="GRPEPROTEIN"/>
</dbReference>
<dbReference type="SUPFAM" id="SSF58014">
    <property type="entry name" value="Coiled-coil domain of nucleotide exchange factor GrpE"/>
    <property type="match status" value="1"/>
</dbReference>
<dbReference type="SUPFAM" id="SSF51064">
    <property type="entry name" value="Head domain of nucleotide exchange factor GrpE"/>
    <property type="match status" value="1"/>
</dbReference>
<dbReference type="PROSITE" id="PS01071">
    <property type="entry name" value="GRPE"/>
    <property type="match status" value="1"/>
</dbReference>
<evidence type="ECO:0000255" key="1">
    <source>
        <dbReference type="HAMAP-Rule" id="MF_01151"/>
    </source>
</evidence>
<evidence type="ECO:0000256" key="2">
    <source>
        <dbReference type="SAM" id="MobiDB-lite"/>
    </source>
</evidence>
<feature type="chain" id="PRO_1000085127" description="Protein GrpE">
    <location>
        <begin position="1"/>
        <end position="208"/>
    </location>
</feature>
<feature type="region of interest" description="Disordered" evidence="2">
    <location>
        <begin position="1"/>
        <end position="59"/>
    </location>
</feature>
<feature type="compositionally biased region" description="Basic and acidic residues" evidence="2">
    <location>
        <begin position="1"/>
        <end position="12"/>
    </location>
</feature>
<feature type="compositionally biased region" description="Polar residues" evidence="2">
    <location>
        <begin position="13"/>
        <end position="23"/>
    </location>
</feature>
<feature type="compositionally biased region" description="Acidic residues" evidence="2">
    <location>
        <begin position="42"/>
        <end position="55"/>
    </location>
</feature>
<organism>
    <name type="scientific">Staphylococcus aureus (strain JH9)</name>
    <dbReference type="NCBI Taxonomy" id="359786"/>
    <lineage>
        <taxon>Bacteria</taxon>
        <taxon>Bacillati</taxon>
        <taxon>Bacillota</taxon>
        <taxon>Bacilli</taxon>
        <taxon>Bacillales</taxon>
        <taxon>Staphylococcaceae</taxon>
        <taxon>Staphylococcus</taxon>
    </lineage>
</organism>
<protein>
    <recommendedName>
        <fullName evidence="1">Protein GrpE</fullName>
    </recommendedName>
    <alternativeName>
        <fullName evidence="1">HSP-70 cofactor</fullName>
    </alternativeName>
</protein>